<evidence type="ECO:0000250" key="1">
    <source>
        <dbReference type="UniProtKB" id="Q06321"/>
    </source>
</evidence>
<evidence type="ECO:0000250" key="2">
    <source>
        <dbReference type="UniProtKB" id="Q2U0C3"/>
    </source>
</evidence>
<evidence type="ECO:0000255" key="3"/>
<evidence type="ECO:0000255" key="4">
    <source>
        <dbReference type="PROSITE-ProRule" id="PRU00145"/>
    </source>
</evidence>
<evidence type="ECO:0000256" key="5">
    <source>
        <dbReference type="SAM" id="MobiDB-lite"/>
    </source>
</evidence>
<evidence type="ECO:0000305" key="6"/>
<organism>
    <name type="scientific">Sclerotinia sclerotiorum (strain ATCC 18683 / 1980 / Ss-1)</name>
    <name type="common">White mold</name>
    <name type="synonym">Whetzelinia sclerotiorum</name>
    <dbReference type="NCBI Taxonomy" id="665079"/>
    <lineage>
        <taxon>Eukaryota</taxon>
        <taxon>Fungi</taxon>
        <taxon>Dikarya</taxon>
        <taxon>Ascomycota</taxon>
        <taxon>Pezizomycotina</taxon>
        <taxon>Leotiomycetes</taxon>
        <taxon>Helotiales</taxon>
        <taxon>Sclerotiniaceae</taxon>
        <taxon>Sclerotinia</taxon>
    </lineage>
</organism>
<protein>
    <recommendedName>
        <fullName evidence="6">Sterol 3-beta-glucosyltransferase</fullName>
        <ecNumber evidence="1">2.4.1.-</ecNumber>
        <ecNumber evidence="1">2.4.1.173</ecNumber>
    </recommendedName>
    <alternativeName>
        <fullName evidence="1">Autophagy-related protein 26</fullName>
    </alternativeName>
</protein>
<proteinExistence type="inferred from homology"/>
<accession>A7ERM5</accession>
<keyword id="KW-0072">Autophagy</keyword>
<keyword id="KW-0963">Cytoplasm</keyword>
<keyword id="KW-0328">Glycosyltransferase</keyword>
<keyword id="KW-0444">Lipid biosynthesis</keyword>
<keyword id="KW-0443">Lipid metabolism</keyword>
<keyword id="KW-0472">Membrane</keyword>
<keyword id="KW-0653">Protein transport</keyword>
<keyword id="KW-1185">Reference proteome</keyword>
<keyword id="KW-0677">Repeat</keyword>
<keyword id="KW-0752">Steroid biosynthesis</keyword>
<keyword id="KW-0753">Steroid metabolism</keyword>
<keyword id="KW-0756">Sterol biosynthesis</keyword>
<keyword id="KW-1207">Sterol metabolism</keyword>
<keyword id="KW-0808">Transferase</keyword>
<keyword id="KW-0813">Transport</keyword>
<reference key="1">
    <citation type="journal article" date="2011" name="PLoS Genet.">
        <title>Genomic analysis of the necrotrophic fungal pathogens Sclerotinia sclerotiorum and Botrytis cinerea.</title>
        <authorList>
            <person name="Amselem J."/>
            <person name="Cuomo C.A."/>
            <person name="van Kan J.A.L."/>
            <person name="Viaud M."/>
            <person name="Benito E.P."/>
            <person name="Couloux A."/>
            <person name="Coutinho P.M."/>
            <person name="de Vries R.P."/>
            <person name="Dyer P.S."/>
            <person name="Fillinger S."/>
            <person name="Fournier E."/>
            <person name="Gout L."/>
            <person name="Hahn M."/>
            <person name="Kohn L."/>
            <person name="Lapalu N."/>
            <person name="Plummer K.M."/>
            <person name="Pradier J.-M."/>
            <person name="Quevillon E."/>
            <person name="Sharon A."/>
            <person name="Simon A."/>
            <person name="ten Have A."/>
            <person name="Tudzynski B."/>
            <person name="Tudzynski P."/>
            <person name="Wincker P."/>
            <person name="Andrew M."/>
            <person name="Anthouard V."/>
            <person name="Beever R.E."/>
            <person name="Beffa R."/>
            <person name="Benoit I."/>
            <person name="Bouzid O."/>
            <person name="Brault B."/>
            <person name="Chen Z."/>
            <person name="Choquer M."/>
            <person name="Collemare J."/>
            <person name="Cotton P."/>
            <person name="Danchin E.G."/>
            <person name="Da Silva C."/>
            <person name="Gautier A."/>
            <person name="Giraud C."/>
            <person name="Giraud T."/>
            <person name="Gonzalez C."/>
            <person name="Grossetete S."/>
            <person name="Gueldener U."/>
            <person name="Henrissat B."/>
            <person name="Howlett B.J."/>
            <person name="Kodira C."/>
            <person name="Kretschmer M."/>
            <person name="Lappartient A."/>
            <person name="Leroch M."/>
            <person name="Levis C."/>
            <person name="Mauceli E."/>
            <person name="Neuveglise C."/>
            <person name="Oeser B."/>
            <person name="Pearson M."/>
            <person name="Poulain J."/>
            <person name="Poussereau N."/>
            <person name="Quesneville H."/>
            <person name="Rascle C."/>
            <person name="Schumacher J."/>
            <person name="Segurens B."/>
            <person name="Sexton A."/>
            <person name="Silva E."/>
            <person name="Sirven C."/>
            <person name="Soanes D.M."/>
            <person name="Talbot N.J."/>
            <person name="Templeton M."/>
            <person name="Yandava C."/>
            <person name="Yarden O."/>
            <person name="Zeng Q."/>
            <person name="Rollins J.A."/>
            <person name="Lebrun M.-H."/>
            <person name="Dickman M."/>
        </authorList>
    </citation>
    <scope>NUCLEOTIDE SEQUENCE [LARGE SCALE GENOMIC DNA]</scope>
    <source>
        <strain>ATCC 18683 / 1980 / Ss-1</strain>
    </source>
</reference>
<comment type="function">
    <text evidence="1">Sterol glycosyltransferase responsible for the glycosylation of ergosterol to form ergosterol-glucoside.</text>
</comment>
<comment type="catalytic activity">
    <reaction evidence="1">
        <text>a sterol + UDP-alpha-D-glucose = a sterol 3-beta-D-glucoside + UDP + H(+)</text>
        <dbReference type="Rhea" id="RHEA:22724"/>
        <dbReference type="ChEBI" id="CHEBI:15378"/>
        <dbReference type="ChEBI" id="CHEBI:15889"/>
        <dbReference type="ChEBI" id="CHEBI:37424"/>
        <dbReference type="ChEBI" id="CHEBI:58223"/>
        <dbReference type="ChEBI" id="CHEBI:58885"/>
        <dbReference type="EC" id="2.4.1.173"/>
    </reaction>
    <physiologicalReaction direction="left-to-right" evidence="1">
        <dbReference type="Rhea" id="RHEA:22725"/>
    </physiologicalReaction>
</comment>
<comment type="catalytic activity">
    <reaction evidence="1">
        <text>ergosterol + UDP-alpha-D-glucose = ergosteryl 3-beta-D-glucoside + UDP + H(+)</text>
        <dbReference type="Rhea" id="RHEA:61836"/>
        <dbReference type="ChEBI" id="CHEBI:15378"/>
        <dbReference type="ChEBI" id="CHEBI:16933"/>
        <dbReference type="ChEBI" id="CHEBI:52973"/>
        <dbReference type="ChEBI" id="CHEBI:58223"/>
        <dbReference type="ChEBI" id="CHEBI:58885"/>
    </reaction>
    <physiologicalReaction direction="left-to-right" evidence="1">
        <dbReference type="Rhea" id="RHEA:61837"/>
    </physiologicalReaction>
</comment>
<comment type="subcellular location">
    <subcellularLocation>
        <location evidence="1">Cytoplasm</location>
    </subcellularLocation>
    <subcellularLocation>
        <location evidence="2">Preautophagosomal structure membrane</location>
        <topology evidence="2">Peripheral membrane protein</topology>
    </subcellularLocation>
</comment>
<comment type="domain">
    <text evidence="2">The GRAM and PH domains are required for the localization of ATG26 to the preautophagosomal structure (PAS) and are involved in autophagy (By similarity).</text>
</comment>
<comment type="similarity">
    <text evidence="6">Belongs to the glycosyltransferase 28 family.</text>
</comment>
<gene>
    <name evidence="1" type="primary">atg26</name>
    <name type="ORF">SS1G_07979</name>
</gene>
<sequence>MAPDDESKKRATRKSTKRWKEEHQVATEIPERFREGDDEDEDCTAGHALNKSVFGMIAAASSIVDFNARFDAQSSDEEYDLGKPTRQSSESHINRSSIDQKMGKFEGHRRLLSESKILRSFSRFSSRSKSKSSNTIARGSRTPSPLRESRQEPTSPEIRYSPLQPKDTPVMSRMLEARAELSLRPSFEMPRKSKDPAEVDDERTSPDSLAERLMEIFKFETPEDVLEEYPCWLMKSVLLQGYMYITTKHICFYAYLPKKANEVVKSGYLSKSGRHNPKYNRYWFRLKDDVLSYYTNPSDLYFPSGNIDLRYGISASIVEKEKGKDSTHFTVETHQRKYNFNADSAPSAKEWVKALQKIIFRSHNDGDSVKISLPIENIIDIEDSRIIDFADTCKIRIIDNDETYAIDEYFFSFFTNGKLALSVLKILVGDTAAQKIPEELLSPLSTADDSRGSSKRTSFQVSRDRKLHGPSVQPNAPALEETVRATLSPLLAPGAGSPRASTDMSLSSSDIFRRSLDINKHGRRSIDLNRLTTEHHRSNSANSISTRRSLSTNRLDQEKRTSKQGSSDSYVHSLEEPGSSEALPSASDETQASASQILRGSDVFLSPTIQHSPSVACNRNKDEIQGPKSRSLTSPIKSADVSPTRTQRPQHPKHAATTGSVSDSNVGQAEISSGPSLQSIVKAGSYPLQRAAGFAGYLNRHSKRMSTLLASESMGYVEKVSGMWKGGKKHYEEPHGIPRDNEMPSIGDDDDNRDGATPADRFRDHFALPPDEKLHATYFGYLQRVLPLYGKIYISDRSFCFRSLLPGTRTKFILPLKDIENVDKEKGFRFGYSGLVITIRGHEEIFFEFNQAENRDDCAITLLQNVETMQYMQDSGLLTMYERESAEMAGAEHRALIQARRGIRSEHDIDMHKAADGGSQSISFDDPRASILNFKPTEPLRITCLTIGSRGDVQPYIALCKGLMAEGHQTKIATHLEFKEWIESHGIEFAPVDGDPAELMRICVENGMFTVSFLKEASSKFRGWIDDLLSSSWRACQNSDILIESPSAMAGIHIAEALRIPYFRAFTMPWTRTRAYPHAFAVPEHKLGGSYNYVTYLMFDTVFWRAISGQVNRWRQKELNLQATGLEKMQPNKVPFLYNFSPSVVVPPLDYSDWIRVTGYWFLDEGANYTPPKDLTDFIANARADGKRLVYVGFGSIVVADSAVLTKTVVASVLKADVRCILSKGWSDRLEKKGANNVEIPLPPEIFQIKSAPHDWLFSQVDAAAHHGGAGTTGASLRAGIPTIIRPFFGDQFFFGQRVEDLGVGVLIKKINVSVFSRALWEATHSERIITKARVLGEQIRKENGVDTAIQSIYRDMEYAKSLIKCKEGKSDDDTLEDSEESWTFIGDDTDPELIKRFYDWESMAHSGTLSDKNMMAWSGSDVASAALSPTRKAA</sequence>
<dbReference type="EC" id="2.4.1.-" evidence="1"/>
<dbReference type="EC" id="2.4.1.173" evidence="1"/>
<dbReference type="EMBL" id="CH476630">
    <property type="protein sequence ID" value="EDN92117.1"/>
    <property type="molecule type" value="Genomic_DNA"/>
</dbReference>
<dbReference type="RefSeq" id="XP_001591353.1">
    <property type="nucleotide sequence ID" value="XM_001591303.1"/>
</dbReference>
<dbReference type="SMR" id="A7ERM5"/>
<dbReference type="FunCoup" id="A7ERM5">
    <property type="interactions" value="82"/>
</dbReference>
<dbReference type="STRING" id="665079.A7ERM5"/>
<dbReference type="GeneID" id="5487401"/>
<dbReference type="KEGG" id="ssl:SS1G_07979"/>
<dbReference type="VEuPathDB" id="FungiDB:sscle_11g081870"/>
<dbReference type="InParanoid" id="A7ERM5"/>
<dbReference type="OMA" id="WRNKTLG"/>
<dbReference type="OrthoDB" id="10261837at2759"/>
<dbReference type="Proteomes" id="UP000001312">
    <property type="component" value="Unassembled WGS sequence"/>
</dbReference>
<dbReference type="GO" id="GO:0034045">
    <property type="term" value="C:phagophore assembly site membrane"/>
    <property type="evidence" value="ECO:0007669"/>
    <property type="project" value="UniProtKB-SubCell"/>
</dbReference>
<dbReference type="GO" id="GO:0016906">
    <property type="term" value="F:sterol 3-beta-glucosyltransferase activity"/>
    <property type="evidence" value="ECO:0007669"/>
    <property type="project" value="UniProtKB-EC"/>
</dbReference>
<dbReference type="GO" id="GO:0008194">
    <property type="term" value="F:UDP-glycosyltransferase activity"/>
    <property type="evidence" value="ECO:0000318"/>
    <property type="project" value="GO_Central"/>
</dbReference>
<dbReference type="GO" id="GO:0006914">
    <property type="term" value="P:autophagy"/>
    <property type="evidence" value="ECO:0007669"/>
    <property type="project" value="UniProtKB-KW"/>
</dbReference>
<dbReference type="GO" id="GO:0005975">
    <property type="term" value="P:carbohydrate metabolic process"/>
    <property type="evidence" value="ECO:0007669"/>
    <property type="project" value="InterPro"/>
</dbReference>
<dbReference type="GO" id="GO:0030259">
    <property type="term" value="P:lipid glycosylation"/>
    <property type="evidence" value="ECO:0007669"/>
    <property type="project" value="InterPro"/>
</dbReference>
<dbReference type="GO" id="GO:0015031">
    <property type="term" value="P:protein transport"/>
    <property type="evidence" value="ECO:0007669"/>
    <property type="project" value="UniProtKB-KW"/>
</dbReference>
<dbReference type="GO" id="GO:0016126">
    <property type="term" value="P:sterol biosynthetic process"/>
    <property type="evidence" value="ECO:0007669"/>
    <property type="project" value="UniProtKB-KW"/>
</dbReference>
<dbReference type="GO" id="GO:0016125">
    <property type="term" value="P:sterol metabolic process"/>
    <property type="evidence" value="ECO:0000318"/>
    <property type="project" value="GO_Central"/>
</dbReference>
<dbReference type="CDD" id="cd03784">
    <property type="entry name" value="GT1_Gtf-like"/>
    <property type="match status" value="1"/>
</dbReference>
<dbReference type="CDD" id="cd13215">
    <property type="entry name" value="PH-GRAM1_AGT26"/>
    <property type="match status" value="1"/>
</dbReference>
<dbReference type="CDD" id="cd13216">
    <property type="entry name" value="PH-GRAM2_AGT26"/>
    <property type="match status" value="1"/>
</dbReference>
<dbReference type="FunFam" id="2.30.29.30:FF:000303">
    <property type="entry name" value="Sterol 3-beta-glucosyltransferase"/>
    <property type="match status" value="1"/>
</dbReference>
<dbReference type="FunFam" id="2.30.29.30:FF:000560">
    <property type="entry name" value="Sterol 3-beta-glucosyltransferase"/>
    <property type="match status" value="1"/>
</dbReference>
<dbReference type="FunFam" id="3.40.50.2000:FF:000029">
    <property type="entry name" value="Sterol 3-beta-glucosyltransferase"/>
    <property type="match status" value="1"/>
</dbReference>
<dbReference type="FunFam" id="3.40.50.2000:FF:000009">
    <property type="entry name" value="Sterol 3-beta-glucosyltransferase UGT80A2"/>
    <property type="match status" value="1"/>
</dbReference>
<dbReference type="Gene3D" id="3.40.50.2000">
    <property type="entry name" value="Glycogen Phosphorylase B"/>
    <property type="match status" value="2"/>
</dbReference>
<dbReference type="Gene3D" id="2.30.29.30">
    <property type="entry name" value="Pleckstrin-homology domain (PH domain)/Phosphotyrosine-binding domain (PTB)"/>
    <property type="match status" value="3"/>
</dbReference>
<dbReference type="InterPro" id="IPR048066">
    <property type="entry name" value="ATG26_PH_GRAM1"/>
</dbReference>
<dbReference type="InterPro" id="IPR048065">
    <property type="entry name" value="ATG26_PH_GRAM2"/>
</dbReference>
<dbReference type="InterPro" id="IPR010610">
    <property type="entry name" value="EryCIII-like_C"/>
</dbReference>
<dbReference type="InterPro" id="IPR050426">
    <property type="entry name" value="Glycosyltransferase_28"/>
</dbReference>
<dbReference type="InterPro" id="IPR004276">
    <property type="entry name" value="GlycoTrans_28_N"/>
</dbReference>
<dbReference type="InterPro" id="IPR004182">
    <property type="entry name" value="GRAM"/>
</dbReference>
<dbReference type="InterPro" id="IPR011993">
    <property type="entry name" value="PH-like_dom_sf"/>
</dbReference>
<dbReference type="InterPro" id="IPR001849">
    <property type="entry name" value="PH_domain"/>
</dbReference>
<dbReference type="InterPro" id="IPR002213">
    <property type="entry name" value="UDP_glucos_trans"/>
</dbReference>
<dbReference type="PANTHER" id="PTHR48050">
    <property type="entry name" value="STEROL 3-BETA-GLUCOSYLTRANSFERASE"/>
    <property type="match status" value="1"/>
</dbReference>
<dbReference type="PANTHER" id="PTHR48050:SF25">
    <property type="entry name" value="STEROL 3-BETA-GLUCOSYLTRANSFERASE"/>
    <property type="match status" value="1"/>
</dbReference>
<dbReference type="Pfam" id="PF06722">
    <property type="entry name" value="EryCIII-like_C"/>
    <property type="match status" value="1"/>
</dbReference>
<dbReference type="Pfam" id="PF03033">
    <property type="entry name" value="Glyco_transf_28"/>
    <property type="match status" value="1"/>
</dbReference>
<dbReference type="Pfam" id="PF02893">
    <property type="entry name" value="GRAM"/>
    <property type="match status" value="2"/>
</dbReference>
<dbReference type="Pfam" id="PF00169">
    <property type="entry name" value="PH"/>
    <property type="match status" value="1"/>
</dbReference>
<dbReference type="SMART" id="SM00568">
    <property type="entry name" value="GRAM"/>
    <property type="match status" value="2"/>
</dbReference>
<dbReference type="SMART" id="SM00233">
    <property type="entry name" value="PH"/>
    <property type="match status" value="1"/>
</dbReference>
<dbReference type="SUPFAM" id="SSF50729">
    <property type="entry name" value="PH domain-like"/>
    <property type="match status" value="1"/>
</dbReference>
<dbReference type="SUPFAM" id="SSF53756">
    <property type="entry name" value="UDP-Glycosyltransferase/glycogen phosphorylase"/>
    <property type="match status" value="1"/>
</dbReference>
<dbReference type="PROSITE" id="PS50003">
    <property type="entry name" value="PH_DOMAIN"/>
    <property type="match status" value="1"/>
</dbReference>
<name>ATG26_SCLS1</name>
<feature type="chain" id="PRO_0000318048" description="Sterol 3-beta-glucosyltransferase">
    <location>
        <begin position="1"/>
        <end position="1435"/>
    </location>
</feature>
<feature type="domain" description="GRAM 1" evidence="3">
    <location>
        <begin position="211"/>
        <end position="258"/>
    </location>
</feature>
<feature type="domain" description="PH" evidence="4">
    <location>
        <begin position="262"/>
        <end position="360"/>
    </location>
</feature>
<feature type="domain" description="GRAM 2" evidence="3">
    <location>
        <begin position="760"/>
        <end position="826"/>
    </location>
</feature>
<feature type="region of interest" description="Disordered" evidence="5">
    <location>
        <begin position="1"/>
        <end position="26"/>
    </location>
</feature>
<feature type="region of interest" description="Disordered" evidence="5">
    <location>
        <begin position="75"/>
        <end position="107"/>
    </location>
</feature>
<feature type="region of interest" description="Disordered" evidence="5">
    <location>
        <begin position="123"/>
        <end position="169"/>
    </location>
</feature>
<feature type="region of interest" description="Disordered" evidence="5">
    <location>
        <begin position="185"/>
        <end position="206"/>
    </location>
</feature>
<feature type="region of interest" description="Disordered" evidence="5">
    <location>
        <begin position="444"/>
        <end position="477"/>
    </location>
</feature>
<feature type="region of interest" description="Disordered" evidence="5">
    <location>
        <begin position="527"/>
        <end position="594"/>
    </location>
</feature>
<feature type="region of interest" description="Disordered" evidence="5">
    <location>
        <begin position="610"/>
        <end position="671"/>
    </location>
</feature>
<feature type="region of interest" description="Disordered" evidence="5">
    <location>
        <begin position="727"/>
        <end position="759"/>
    </location>
</feature>
<feature type="compositionally biased region" description="Polar residues" evidence="5">
    <location>
        <begin position="85"/>
        <end position="99"/>
    </location>
</feature>
<feature type="compositionally biased region" description="Low complexity" evidence="5">
    <location>
        <begin position="123"/>
        <end position="133"/>
    </location>
</feature>
<feature type="compositionally biased region" description="Polar residues" evidence="5">
    <location>
        <begin position="134"/>
        <end position="143"/>
    </location>
</feature>
<feature type="compositionally biased region" description="Basic and acidic residues" evidence="5">
    <location>
        <begin position="189"/>
        <end position="206"/>
    </location>
</feature>
<feature type="compositionally biased region" description="Basic and acidic residues" evidence="5">
    <location>
        <begin position="527"/>
        <end position="537"/>
    </location>
</feature>
<feature type="compositionally biased region" description="Polar residues" evidence="5">
    <location>
        <begin position="539"/>
        <end position="554"/>
    </location>
</feature>
<feature type="compositionally biased region" description="Polar residues" evidence="5">
    <location>
        <begin position="628"/>
        <end position="647"/>
    </location>
</feature>
<feature type="compositionally biased region" description="Polar residues" evidence="5">
    <location>
        <begin position="657"/>
        <end position="671"/>
    </location>
</feature>
<feature type="compositionally biased region" description="Basic and acidic residues" evidence="5">
    <location>
        <begin position="729"/>
        <end position="742"/>
    </location>
</feature>
<feature type="binding site" evidence="1">
    <location>
        <position position="949"/>
    </location>
    <ligand>
        <name>UDP-alpha-D-glucose</name>
        <dbReference type="ChEBI" id="CHEBI:58885"/>
    </ligand>
</feature>
<feature type="binding site" evidence="1">
    <location>
        <position position="950"/>
    </location>
    <ligand>
        <name>UDP-alpha-D-glucose</name>
        <dbReference type="ChEBI" id="CHEBI:58885"/>
    </ligand>
</feature>
<feature type="binding site" evidence="1">
    <location>
        <position position="952"/>
    </location>
    <ligand>
        <name>UDP-alpha-D-glucose</name>
        <dbReference type="ChEBI" id="CHEBI:58885"/>
    </ligand>
</feature>
<feature type="binding site" evidence="1">
    <location>
        <position position="1252"/>
    </location>
    <ligand>
        <name>UDP-alpha-D-glucose</name>
        <dbReference type="ChEBI" id="CHEBI:58885"/>
    </ligand>
</feature>
<feature type="binding site" evidence="1">
    <location>
        <position position="1254"/>
    </location>
    <ligand>
        <name>UDP-alpha-D-glucose</name>
        <dbReference type="ChEBI" id="CHEBI:58885"/>
    </ligand>
</feature>
<feature type="binding site" evidence="1">
    <location>
        <position position="1267"/>
    </location>
    <ligand>
        <name>UDP-alpha-D-glucose</name>
        <dbReference type="ChEBI" id="CHEBI:58885"/>
    </ligand>
</feature>
<feature type="binding site" evidence="1">
    <location>
        <position position="1271"/>
    </location>
    <ligand>
        <name>UDP-alpha-D-glucose</name>
        <dbReference type="ChEBI" id="CHEBI:58885"/>
    </ligand>
</feature>
<feature type="binding site" evidence="1">
    <location>
        <position position="1272"/>
    </location>
    <ligand>
        <name>UDP-alpha-D-glucose</name>
        <dbReference type="ChEBI" id="CHEBI:58885"/>
    </ligand>
</feature>
<feature type="binding site" evidence="1">
    <location>
        <position position="1291"/>
    </location>
    <ligand>
        <name>UDP-alpha-D-glucose</name>
        <dbReference type="ChEBI" id="CHEBI:58885"/>
    </ligand>
</feature>
<feature type="binding site" evidence="1">
    <location>
        <position position="1292"/>
    </location>
    <ligand>
        <name>UDP-alpha-D-glucose</name>
        <dbReference type="ChEBI" id="CHEBI:58885"/>
    </ligand>
</feature>